<proteinExistence type="inferred from homology"/>
<organism>
    <name type="scientific">Rhizobium etli (strain ATCC 51251 / DSM 11541 / JCM 21823 / NBRC 15573 / CFN 42)</name>
    <dbReference type="NCBI Taxonomy" id="347834"/>
    <lineage>
        <taxon>Bacteria</taxon>
        <taxon>Pseudomonadati</taxon>
        <taxon>Pseudomonadota</taxon>
        <taxon>Alphaproteobacteria</taxon>
        <taxon>Hyphomicrobiales</taxon>
        <taxon>Rhizobiaceae</taxon>
        <taxon>Rhizobium/Agrobacterium group</taxon>
        <taxon>Rhizobium</taxon>
    </lineage>
</organism>
<reference key="1">
    <citation type="journal article" date="2006" name="Proc. Natl. Acad. Sci. U.S.A.">
        <title>The partitioned Rhizobium etli genome: genetic and metabolic redundancy in seven interacting replicons.</title>
        <authorList>
            <person name="Gonzalez V."/>
            <person name="Santamaria R.I."/>
            <person name="Bustos P."/>
            <person name="Hernandez-Gonzalez I."/>
            <person name="Medrano-Soto A."/>
            <person name="Moreno-Hagelsieb G."/>
            <person name="Janga S.C."/>
            <person name="Ramirez M.A."/>
            <person name="Jimenez-Jacinto V."/>
            <person name="Collado-Vides J."/>
            <person name="Davila G."/>
        </authorList>
    </citation>
    <scope>NUCLEOTIDE SEQUENCE [LARGE SCALE GENOMIC DNA]</scope>
    <source>
        <strain>ATCC 51251 / DSM 11541 / JCM 21823 / NBRC 15573 / CFN 42</strain>
    </source>
</reference>
<gene>
    <name evidence="1" type="primary">uvrC</name>
    <name type="ordered locus">RHE_CH01479</name>
</gene>
<name>UVRC_RHIEC</name>
<feature type="chain" id="PRO_0000264930" description="UvrABC system protein C">
    <location>
        <begin position="1"/>
        <end position="679"/>
    </location>
</feature>
<feature type="domain" description="GIY-YIG" evidence="1">
    <location>
        <begin position="65"/>
        <end position="143"/>
    </location>
</feature>
<feature type="domain" description="UVR" evidence="1">
    <location>
        <begin position="253"/>
        <end position="288"/>
    </location>
</feature>
<sequence>MNGRKLPDGGVLYDDTDESEDEIEVEGDVSAAPLAVAVDWNAGSLNETGLVGAELIGEFVKRLPNSPGVYRMLNAEGDVLYVGKARSLKKRVGNYAVGRVHSNRIAQMVRQTANMEFVTTRTETEALLLEANLIKRLRPRFNVLLRDDKSFPYILITGDHRAPAIFKHRGARARKGDYFGPFASAGAVGRTINSLQRAFLIRTCTDSVFETRTRPCLLYQIKRCSGPCTHEVSDEGYAELVQEAKDFLSGKSQKVKSHMAEAMNQAAEDLDFERAAIYRDRLAALSHVQSHQGINPAGVDEADVFAIHHEGGVSCIQVFFFRTGQNWGNRAYFPKADPQLSSAEVLNAFLAQFYDDKPVPKQIMLSETAEELELLAAALSEKAGHKVSILVPRRGEKRDLVDHVVGNAREAHGRKLAETASQSRLLEGFKETFGLAYAPQRIEIYDNSHIMGTNAVGGMVVAGPEGFVKNQYRKFNIKSTDITPGDDFGMMKEVMTRRFSRLIKEEGIPDRTAQAAAADAADMPFPAWPDVILIDGGQGQMTAVRAILAELGITDSVTAIGIAKGVDRDAGRERFFAPGRESFTLPPRDPVLYFIQRMRDEAHRFAIGSHRVRRKKEMVKNPLDEIGGIGPSRKRALLQHFGTAKAVSRAALSDLMAVEGISEAVAKQVYNHFHEDAAK</sequence>
<evidence type="ECO:0000255" key="1">
    <source>
        <dbReference type="HAMAP-Rule" id="MF_00203"/>
    </source>
</evidence>
<comment type="function">
    <text evidence="1">The UvrABC repair system catalyzes the recognition and processing of DNA lesions. UvrC both incises the 5' and 3' sides of the lesion. The N-terminal half is responsible for the 3' incision and the C-terminal half is responsible for the 5' incision.</text>
</comment>
<comment type="subunit">
    <text evidence="1">Interacts with UvrB in an incision complex.</text>
</comment>
<comment type="subcellular location">
    <subcellularLocation>
        <location evidence="1">Cytoplasm</location>
    </subcellularLocation>
</comment>
<comment type="similarity">
    <text evidence="1">Belongs to the UvrC family.</text>
</comment>
<keyword id="KW-0963">Cytoplasm</keyword>
<keyword id="KW-0227">DNA damage</keyword>
<keyword id="KW-0228">DNA excision</keyword>
<keyword id="KW-0234">DNA repair</keyword>
<keyword id="KW-0267">Excision nuclease</keyword>
<keyword id="KW-1185">Reference proteome</keyword>
<keyword id="KW-0742">SOS response</keyword>
<accession>Q2KA54</accession>
<dbReference type="EMBL" id="CP000133">
    <property type="protein sequence ID" value="ABC90282.1"/>
    <property type="molecule type" value="Genomic_DNA"/>
</dbReference>
<dbReference type="RefSeq" id="WP_011424812.1">
    <property type="nucleotide sequence ID" value="NC_007761.1"/>
</dbReference>
<dbReference type="SMR" id="Q2KA54"/>
<dbReference type="KEGG" id="ret:RHE_CH01479"/>
<dbReference type="eggNOG" id="COG0322">
    <property type="taxonomic scope" value="Bacteria"/>
</dbReference>
<dbReference type="HOGENOM" id="CLU_014841_3_0_5"/>
<dbReference type="OrthoDB" id="9804933at2"/>
<dbReference type="Proteomes" id="UP000001936">
    <property type="component" value="Chromosome"/>
</dbReference>
<dbReference type="GO" id="GO:0005737">
    <property type="term" value="C:cytoplasm"/>
    <property type="evidence" value="ECO:0007669"/>
    <property type="project" value="UniProtKB-SubCell"/>
</dbReference>
<dbReference type="GO" id="GO:0009380">
    <property type="term" value="C:excinuclease repair complex"/>
    <property type="evidence" value="ECO:0007669"/>
    <property type="project" value="InterPro"/>
</dbReference>
<dbReference type="GO" id="GO:0003677">
    <property type="term" value="F:DNA binding"/>
    <property type="evidence" value="ECO:0007669"/>
    <property type="project" value="UniProtKB-UniRule"/>
</dbReference>
<dbReference type="GO" id="GO:0009381">
    <property type="term" value="F:excinuclease ABC activity"/>
    <property type="evidence" value="ECO:0007669"/>
    <property type="project" value="UniProtKB-UniRule"/>
</dbReference>
<dbReference type="GO" id="GO:0006289">
    <property type="term" value="P:nucleotide-excision repair"/>
    <property type="evidence" value="ECO:0007669"/>
    <property type="project" value="UniProtKB-UniRule"/>
</dbReference>
<dbReference type="GO" id="GO:0009432">
    <property type="term" value="P:SOS response"/>
    <property type="evidence" value="ECO:0007669"/>
    <property type="project" value="UniProtKB-UniRule"/>
</dbReference>
<dbReference type="CDD" id="cd10434">
    <property type="entry name" value="GIY-YIG_UvrC_Cho"/>
    <property type="match status" value="1"/>
</dbReference>
<dbReference type="FunFam" id="3.30.420.340:FF:000001">
    <property type="entry name" value="UvrABC system protein C"/>
    <property type="match status" value="1"/>
</dbReference>
<dbReference type="FunFam" id="3.40.1440.10:FF:000001">
    <property type="entry name" value="UvrABC system protein C"/>
    <property type="match status" value="1"/>
</dbReference>
<dbReference type="Gene3D" id="1.10.150.20">
    <property type="entry name" value="5' to 3' exonuclease, C-terminal subdomain"/>
    <property type="match status" value="1"/>
</dbReference>
<dbReference type="Gene3D" id="3.40.1440.10">
    <property type="entry name" value="GIY-YIG endonuclease"/>
    <property type="match status" value="1"/>
</dbReference>
<dbReference type="Gene3D" id="4.10.860.10">
    <property type="entry name" value="UVR domain"/>
    <property type="match status" value="1"/>
</dbReference>
<dbReference type="Gene3D" id="3.30.420.340">
    <property type="entry name" value="UvrC, RNAse H endonuclease domain"/>
    <property type="match status" value="1"/>
</dbReference>
<dbReference type="HAMAP" id="MF_00203">
    <property type="entry name" value="UvrC"/>
    <property type="match status" value="1"/>
</dbReference>
<dbReference type="InterPro" id="IPR000305">
    <property type="entry name" value="GIY-YIG_endonuc"/>
</dbReference>
<dbReference type="InterPro" id="IPR035901">
    <property type="entry name" value="GIY-YIG_endonuc_sf"/>
</dbReference>
<dbReference type="InterPro" id="IPR047296">
    <property type="entry name" value="GIY-YIG_UvrC_Cho"/>
</dbReference>
<dbReference type="InterPro" id="IPR003583">
    <property type="entry name" value="Hlx-hairpin-Hlx_DNA-bd_motif"/>
</dbReference>
<dbReference type="InterPro" id="IPR010994">
    <property type="entry name" value="RuvA_2-like"/>
</dbReference>
<dbReference type="InterPro" id="IPR001943">
    <property type="entry name" value="UVR_dom"/>
</dbReference>
<dbReference type="InterPro" id="IPR036876">
    <property type="entry name" value="UVR_dom_sf"/>
</dbReference>
<dbReference type="InterPro" id="IPR050066">
    <property type="entry name" value="UvrABC_protein_C"/>
</dbReference>
<dbReference type="InterPro" id="IPR004791">
    <property type="entry name" value="UvrC"/>
</dbReference>
<dbReference type="InterPro" id="IPR001162">
    <property type="entry name" value="UvrC_RNase_H_dom"/>
</dbReference>
<dbReference type="InterPro" id="IPR038476">
    <property type="entry name" value="UvrC_RNase_H_dom_sf"/>
</dbReference>
<dbReference type="NCBIfam" id="NF001824">
    <property type="entry name" value="PRK00558.1-5"/>
    <property type="match status" value="1"/>
</dbReference>
<dbReference type="NCBIfam" id="TIGR00194">
    <property type="entry name" value="uvrC"/>
    <property type="match status" value="1"/>
</dbReference>
<dbReference type="PANTHER" id="PTHR30562:SF1">
    <property type="entry name" value="UVRABC SYSTEM PROTEIN C"/>
    <property type="match status" value="1"/>
</dbReference>
<dbReference type="PANTHER" id="PTHR30562">
    <property type="entry name" value="UVRC/OXIDOREDUCTASE"/>
    <property type="match status" value="1"/>
</dbReference>
<dbReference type="Pfam" id="PF01541">
    <property type="entry name" value="GIY-YIG"/>
    <property type="match status" value="1"/>
</dbReference>
<dbReference type="Pfam" id="PF14520">
    <property type="entry name" value="HHH_5"/>
    <property type="match status" value="1"/>
</dbReference>
<dbReference type="Pfam" id="PF02151">
    <property type="entry name" value="UVR"/>
    <property type="match status" value="1"/>
</dbReference>
<dbReference type="Pfam" id="PF22920">
    <property type="entry name" value="UvrC_RNaseH"/>
    <property type="match status" value="1"/>
</dbReference>
<dbReference type="Pfam" id="PF08459">
    <property type="entry name" value="UvrC_RNaseH_dom"/>
    <property type="match status" value="1"/>
</dbReference>
<dbReference type="SMART" id="SM00465">
    <property type="entry name" value="GIYc"/>
    <property type="match status" value="1"/>
</dbReference>
<dbReference type="SMART" id="SM00278">
    <property type="entry name" value="HhH1"/>
    <property type="match status" value="2"/>
</dbReference>
<dbReference type="SUPFAM" id="SSF46600">
    <property type="entry name" value="C-terminal UvrC-binding domain of UvrB"/>
    <property type="match status" value="1"/>
</dbReference>
<dbReference type="SUPFAM" id="SSF82771">
    <property type="entry name" value="GIY-YIG endonuclease"/>
    <property type="match status" value="1"/>
</dbReference>
<dbReference type="SUPFAM" id="SSF47781">
    <property type="entry name" value="RuvA domain 2-like"/>
    <property type="match status" value="1"/>
</dbReference>
<dbReference type="PROSITE" id="PS50164">
    <property type="entry name" value="GIY_YIG"/>
    <property type="match status" value="1"/>
</dbReference>
<dbReference type="PROSITE" id="PS50151">
    <property type="entry name" value="UVR"/>
    <property type="match status" value="1"/>
</dbReference>
<dbReference type="PROSITE" id="PS50165">
    <property type="entry name" value="UVRC"/>
    <property type="match status" value="1"/>
</dbReference>
<protein>
    <recommendedName>
        <fullName evidence="1">UvrABC system protein C</fullName>
        <shortName evidence="1">Protein UvrC</shortName>
    </recommendedName>
    <alternativeName>
        <fullName evidence="1">Excinuclease ABC subunit C</fullName>
    </alternativeName>
</protein>